<reference key="1">
    <citation type="journal article" date="2004" name="Science">
        <title>The 1.2-megabase genome sequence of Mimivirus.</title>
        <authorList>
            <person name="Raoult D."/>
            <person name="Audic S."/>
            <person name="Robert C."/>
            <person name="Abergel C."/>
            <person name="Renesto P."/>
            <person name="Ogata H."/>
            <person name="La Scola B."/>
            <person name="Susan M."/>
            <person name="Claverie J.-M."/>
        </authorList>
    </citation>
    <scope>NUCLEOTIDE SEQUENCE [LARGE SCALE GENOMIC DNA]</scope>
    <source>
        <strain>Rowbotham-Bradford</strain>
    </source>
</reference>
<name>YL148_MIMIV</name>
<accession>Q5URA0</accession>
<proteinExistence type="predicted"/>
<sequence length="229" mass="26222">MFDVLPVEIWIIILDYLKSDKYNLYLVNKQFLSISLMNKVCDNELIITTIKTTNILALKLLIDYYNQESILDYALYFSCGIGNVRIIKEMIPDNYIGTEKLIFAAIQNDQDSVIDFFASRGFDLRINNDYLLRLAAEMNSLKTAKYLVSKGANCQAYNNAPLQKASINGHFEMVKFLVENGASVAAKKSYAIKKAKLYGHNNIVEYLEAKLIEIVGEKIFLEYFKPKYS</sequence>
<organismHost>
    <name type="scientific">Acanthamoeba polyphaga</name>
    <name type="common">Amoeba</name>
    <dbReference type="NCBI Taxonomy" id="5757"/>
</organismHost>
<keyword id="KW-0040">ANK repeat</keyword>
<keyword id="KW-1185">Reference proteome</keyword>
<keyword id="KW-0677">Repeat</keyword>
<dbReference type="EMBL" id="AY653733">
    <property type="protein sequence ID" value="AAV50423.1"/>
    <property type="molecule type" value="Genomic_DNA"/>
</dbReference>
<dbReference type="SMR" id="Q5URA0"/>
<dbReference type="KEGG" id="vg:9924748"/>
<dbReference type="OrthoDB" id="8173at10239"/>
<dbReference type="Proteomes" id="UP000001134">
    <property type="component" value="Genome"/>
</dbReference>
<dbReference type="Gene3D" id="1.25.40.20">
    <property type="entry name" value="Ankyrin repeat-containing domain"/>
    <property type="match status" value="1"/>
</dbReference>
<dbReference type="InterPro" id="IPR002110">
    <property type="entry name" value="Ankyrin_rpt"/>
</dbReference>
<dbReference type="InterPro" id="IPR036770">
    <property type="entry name" value="Ankyrin_rpt-contain_sf"/>
</dbReference>
<dbReference type="PANTHER" id="PTHR24188">
    <property type="entry name" value="ANKYRIN REPEAT PROTEIN"/>
    <property type="match status" value="1"/>
</dbReference>
<dbReference type="PANTHER" id="PTHR24188:SF29">
    <property type="entry name" value="GH09064P"/>
    <property type="match status" value="1"/>
</dbReference>
<dbReference type="Pfam" id="PF12796">
    <property type="entry name" value="Ank_2"/>
    <property type="match status" value="1"/>
</dbReference>
<dbReference type="SMART" id="SM00248">
    <property type="entry name" value="ANK"/>
    <property type="match status" value="2"/>
</dbReference>
<dbReference type="SUPFAM" id="SSF48403">
    <property type="entry name" value="Ankyrin repeat"/>
    <property type="match status" value="1"/>
</dbReference>
<dbReference type="PROSITE" id="PS50297">
    <property type="entry name" value="ANK_REP_REGION"/>
    <property type="match status" value="1"/>
</dbReference>
<dbReference type="PROSITE" id="PS50088">
    <property type="entry name" value="ANK_REPEAT"/>
    <property type="match status" value="1"/>
</dbReference>
<protein>
    <recommendedName>
        <fullName>Putative ankyrin repeat protein L148</fullName>
    </recommendedName>
</protein>
<gene>
    <name type="ordered locus">MIMI_L148</name>
</gene>
<feature type="chain" id="PRO_0000067161" description="Putative ankyrin repeat protein L148">
    <location>
        <begin position="1"/>
        <end position="229"/>
    </location>
</feature>
<feature type="repeat" description="ANK 1">
    <location>
        <begin position="70"/>
        <end position="95"/>
    </location>
</feature>
<feature type="repeat" description="ANK 2">
    <location>
        <begin position="96"/>
        <end position="126"/>
    </location>
</feature>
<feature type="repeat" description="ANK 3">
    <location>
        <begin position="127"/>
        <end position="156"/>
    </location>
</feature>
<feature type="repeat" description="ANK 4">
    <location>
        <begin position="157"/>
        <end position="186"/>
    </location>
</feature>
<organism>
    <name type="scientific">Acanthamoeba polyphaga mimivirus</name>
    <name type="common">APMV</name>
    <dbReference type="NCBI Taxonomy" id="212035"/>
    <lineage>
        <taxon>Viruses</taxon>
        <taxon>Varidnaviria</taxon>
        <taxon>Bamfordvirae</taxon>
        <taxon>Nucleocytoviricota</taxon>
        <taxon>Megaviricetes</taxon>
        <taxon>Imitervirales</taxon>
        <taxon>Mimiviridae</taxon>
        <taxon>Megamimivirinae</taxon>
        <taxon>Mimivirus</taxon>
        <taxon>Mimivirus bradfordmassiliense</taxon>
    </lineage>
</organism>